<keyword id="KW-0030">Aminoacyl-tRNA synthetase</keyword>
<keyword id="KW-0067">ATP-binding</keyword>
<keyword id="KW-0963">Cytoplasm</keyword>
<keyword id="KW-0436">Ligase</keyword>
<keyword id="KW-0547">Nucleotide-binding</keyword>
<keyword id="KW-0648">Protein biosynthesis</keyword>
<feature type="chain" id="PRO_1000019793" description="Serine--tRNA ligase">
    <location>
        <begin position="1"/>
        <end position="476"/>
    </location>
</feature>
<feature type="binding site" evidence="1">
    <location>
        <begin position="279"/>
        <end position="281"/>
    </location>
    <ligand>
        <name>L-serine</name>
        <dbReference type="ChEBI" id="CHEBI:33384"/>
    </ligand>
</feature>
<feature type="binding site" evidence="1">
    <location>
        <begin position="310"/>
        <end position="312"/>
    </location>
    <ligand>
        <name>ATP</name>
        <dbReference type="ChEBI" id="CHEBI:30616"/>
    </ligand>
</feature>
<feature type="binding site" evidence="1">
    <location>
        <position position="333"/>
    </location>
    <ligand>
        <name>L-serine</name>
        <dbReference type="ChEBI" id="CHEBI:33384"/>
    </ligand>
</feature>
<feature type="binding site" evidence="1">
    <location>
        <begin position="400"/>
        <end position="403"/>
    </location>
    <ligand>
        <name>ATP</name>
        <dbReference type="ChEBI" id="CHEBI:30616"/>
    </ligand>
</feature>
<feature type="binding site" evidence="1">
    <location>
        <position position="435"/>
    </location>
    <ligand>
        <name>L-serine</name>
        <dbReference type="ChEBI" id="CHEBI:33384"/>
    </ligand>
</feature>
<sequence length="476" mass="52436">MHDIKSIRDNPQAFDAAFTRRGLAPIADSLIKLDETRRIAIIASEQAQARRNAASKEIGEAKKAKDNARAEALMAEVTELKTTMPALDEAVKAADAALKKALSEIPNLPLAEVPQGADEHGNVVRSHFGAPRSYAFTPKPHYELGEALGQMDFEAAAKMSGARFVVLKKGLARLERAIGQFFLDVHTGEHGYTEVNPPLLVKDDAMFGTAQLPKFSNDQFRVDTEEIQIKSAYEEFEKAKNAILNYVEEAGIKSAREEKLEVLGFAYEPNPDRRWLIPTAEVSLTNLVRESILDEKELPMRLTALTPCFRAEAGAAGRDTRGMIRQHQFTKVELVSITTPEQSKDEHERMLACAEEVLRRLGLHYRVMTLCTGDMGFASQKTYDIEVWMPGQGEGGAYREISSCSVCGDFQARRMDARSRGPDGKPRFVHTLNGSGTAVGRALIAVIENYQQEDGSIAVPDALLPYMGGLKVIANS</sequence>
<reference key="1">
    <citation type="submission" date="2006-09" db="EMBL/GenBank/DDBJ databases">
        <title>Complete sequence of Rhodopseudomonas palustris BisA53.</title>
        <authorList>
            <consortium name="US DOE Joint Genome Institute"/>
            <person name="Copeland A."/>
            <person name="Lucas S."/>
            <person name="Lapidus A."/>
            <person name="Barry K."/>
            <person name="Detter J.C."/>
            <person name="Glavina del Rio T."/>
            <person name="Hammon N."/>
            <person name="Israni S."/>
            <person name="Dalin E."/>
            <person name="Tice H."/>
            <person name="Pitluck S."/>
            <person name="Chain P."/>
            <person name="Malfatti S."/>
            <person name="Shin M."/>
            <person name="Vergez L."/>
            <person name="Schmutz J."/>
            <person name="Larimer F."/>
            <person name="Land M."/>
            <person name="Hauser L."/>
            <person name="Pelletier D.A."/>
            <person name="Kyrpides N."/>
            <person name="Kim E."/>
            <person name="Harwood C.S."/>
            <person name="Oda Y."/>
            <person name="Richardson P."/>
        </authorList>
    </citation>
    <scope>NUCLEOTIDE SEQUENCE [LARGE SCALE GENOMIC DNA]</scope>
    <source>
        <strain>BisA53</strain>
    </source>
</reference>
<accession>Q07N47</accession>
<protein>
    <recommendedName>
        <fullName evidence="1">Serine--tRNA ligase</fullName>
        <ecNumber evidence="1">6.1.1.11</ecNumber>
    </recommendedName>
    <alternativeName>
        <fullName evidence="1">Seryl-tRNA synthetase</fullName>
        <shortName evidence="1">SerRS</shortName>
    </alternativeName>
    <alternativeName>
        <fullName evidence="1">Seryl-tRNA(Ser/Sec) synthetase</fullName>
    </alternativeName>
</protein>
<organism>
    <name type="scientific">Rhodopseudomonas palustris (strain BisA53)</name>
    <dbReference type="NCBI Taxonomy" id="316055"/>
    <lineage>
        <taxon>Bacteria</taxon>
        <taxon>Pseudomonadati</taxon>
        <taxon>Pseudomonadota</taxon>
        <taxon>Alphaproteobacteria</taxon>
        <taxon>Hyphomicrobiales</taxon>
        <taxon>Nitrobacteraceae</taxon>
        <taxon>Rhodopseudomonas</taxon>
    </lineage>
</organism>
<comment type="function">
    <text evidence="1">Catalyzes the attachment of serine to tRNA(Ser). Is also able to aminoacylate tRNA(Sec) with serine, to form the misacylated tRNA L-seryl-tRNA(Sec), which will be further converted into selenocysteinyl-tRNA(Sec).</text>
</comment>
<comment type="catalytic activity">
    <reaction evidence="1">
        <text>tRNA(Ser) + L-serine + ATP = L-seryl-tRNA(Ser) + AMP + diphosphate + H(+)</text>
        <dbReference type="Rhea" id="RHEA:12292"/>
        <dbReference type="Rhea" id="RHEA-COMP:9669"/>
        <dbReference type="Rhea" id="RHEA-COMP:9703"/>
        <dbReference type="ChEBI" id="CHEBI:15378"/>
        <dbReference type="ChEBI" id="CHEBI:30616"/>
        <dbReference type="ChEBI" id="CHEBI:33019"/>
        <dbReference type="ChEBI" id="CHEBI:33384"/>
        <dbReference type="ChEBI" id="CHEBI:78442"/>
        <dbReference type="ChEBI" id="CHEBI:78533"/>
        <dbReference type="ChEBI" id="CHEBI:456215"/>
        <dbReference type="EC" id="6.1.1.11"/>
    </reaction>
</comment>
<comment type="catalytic activity">
    <reaction evidence="1">
        <text>tRNA(Sec) + L-serine + ATP = L-seryl-tRNA(Sec) + AMP + diphosphate + H(+)</text>
        <dbReference type="Rhea" id="RHEA:42580"/>
        <dbReference type="Rhea" id="RHEA-COMP:9742"/>
        <dbReference type="Rhea" id="RHEA-COMP:10128"/>
        <dbReference type="ChEBI" id="CHEBI:15378"/>
        <dbReference type="ChEBI" id="CHEBI:30616"/>
        <dbReference type="ChEBI" id="CHEBI:33019"/>
        <dbReference type="ChEBI" id="CHEBI:33384"/>
        <dbReference type="ChEBI" id="CHEBI:78442"/>
        <dbReference type="ChEBI" id="CHEBI:78533"/>
        <dbReference type="ChEBI" id="CHEBI:456215"/>
        <dbReference type="EC" id="6.1.1.11"/>
    </reaction>
</comment>
<comment type="pathway">
    <text evidence="1">Aminoacyl-tRNA biosynthesis; selenocysteinyl-tRNA(Sec) biosynthesis; L-seryl-tRNA(Sec) from L-serine and tRNA(Sec): step 1/1.</text>
</comment>
<comment type="subunit">
    <text evidence="1">Homodimer. The tRNA molecule binds across the dimer.</text>
</comment>
<comment type="subcellular location">
    <subcellularLocation>
        <location evidence="1">Cytoplasm</location>
    </subcellularLocation>
</comment>
<comment type="domain">
    <text evidence="1">Consists of two distinct domains, a catalytic core and a N-terminal extension that is involved in tRNA binding.</text>
</comment>
<comment type="similarity">
    <text evidence="1">Belongs to the class-II aminoacyl-tRNA synthetase family. Type-1 seryl-tRNA synthetase subfamily.</text>
</comment>
<proteinExistence type="inferred from homology"/>
<name>SYS_RHOP5</name>
<gene>
    <name evidence="1" type="primary">serS</name>
    <name type="ordered locus">RPE_2700</name>
</gene>
<evidence type="ECO:0000255" key="1">
    <source>
        <dbReference type="HAMAP-Rule" id="MF_00176"/>
    </source>
</evidence>
<dbReference type="EC" id="6.1.1.11" evidence="1"/>
<dbReference type="EMBL" id="CP000463">
    <property type="protein sequence ID" value="ABJ06637.1"/>
    <property type="molecule type" value="Genomic_DNA"/>
</dbReference>
<dbReference type="SMR" id="Q07N47"/>
<dbReference type="STRING" id="316055.RPE_2700"/>
<dbReference type="KEGG" id="rpe:RPE_2700"/>
<dbReference type="eggNOG" id="COG0172">
    <property type="taxonomic scope" value="Bacteria"/>
</dbReference>
<dbReference type="HOGENOM" id="CLU_023797_1_1_5"/>
<dbReference type="OrthoDB" id="9804647at2"/>
<dbReference type="UniPathway" id="UPA00906">
    <property type="reaction ID" value="UER00895"/>
</dbReference>
<dbReference type="GO" id="GO:0005737">
    <property type="term" value="C:cytoplasm"/>
    <property type="evidence" value="ECO:0007669"/>
    <property type="project" value="UniProtKB-SubCell"/>
</dbReference>
<dbReference type="GO" id="GO:0005524">
    <property type="term" value="F:ATP binding"/>
    <property type="evidence" value="ECO:0007669"/>
    <property type="project" value="UniProtKB-UniRule"/>
</dbReference>
<dbReference type="GO" id="GO:0004828">
    <property type="term" value="F:serine-tRNA ligase activity"/>
    <property type="evidence" value="ECO:0007669"/>
    <property type="project" value="UniProtKB-UniRule"/>
</dbReference>
<dbReference type="GO" id="GO:0016260">
    <property type="term" value="P:selenocysteine biosynthetic process"/>
    <property type="evidence" value="ECO:0007669"/>
    <property type="project" value="UniProtKB-UniRule"/>
</dbReference>
<dbReference type="GO" id="GO:0006434">
    <property type="term" value="P:seryl-tRNA aminoacylation"/>
    <property type="evidence" value="ECO:0007669"/>
    <property type="project" value="UniProtKB-UniRule"/>
</dbReference>
<dbReference type="CDD" id="cd00770">
    <property type="entry name" value="SerRS_core"/>
    <property type="match status" value="1"/>
</dbReference>
<dbReference type="Gene3D" id="3.30.930.10">
    <property type="entry name" value="Bira Bifunctional Protein, Domain 2"/>
    <property type="match status" value="1"/>
</dbReference>
<dbReference type="Gene3D" id="1.10.287.40">
    <property type="entry name" value="Serine-tRNA synthetase, tRNA binding domain"/>
    <property type="match status" value="1"/>
</dbReference>
<dbReference type="HAMAP" id="MF_00176">
    <property type="entry name" value="Ser_tRNA_synth_type1"/>
    <property type="match status" value="1"/>
</dbReference>
<dbReference type="InterPro" id="IPR002314">
    <property type="entry name" value="aa-tRNA-synt_IIb"/>
</dbReference>
<dbReference type="InterPro" id="IPR006195">
    <property type="entry name" value="aa-tRNA-synth_II"/>
</dbReference>
<dbReference type="InterPro" id="IPR045864">
    <property type="entry name" value="aa-tRNA-synth_II/BPL/LPL"/>
</dbReference>
<dbReference type="InterPro" id="IPR002317">
    <property type="entry name" value="Ser-tRNA-ligase_type_1"/>
</dbReference>
<dbReference type="InterPro" id="IPR015866">
    <property type="entry name" value="Ser-tRNA-synth_1_N"/>
</dbReference>
<dbReference type="InterPro" id="IPR042103">
    <property type="entry name" value="SerRS_1_N_sf"/>
</dbReference>
<dbReference type="InterPro" id="IPR033729">
    <property type="entry name" value="SerRS_core"/>
</dbReference>
<dbReference type="InterPro" id="IPR010978">
    <property type="entry name" value="tRNA-bd_arm"/>
</dbReference>
<dbReference type="NCBIfam" id="TIGR00414">
    <property type="entry name" value="serS"/>
    <property type="match status" value="1"/>
</dbReference>
<dbReference type="PANTHER" id="PTHR43697:SF1">
    <property type="entry name" value="SERINE--TRNA LIGASE"/>
    <property type="match status" value="1"/>
</dbReference>
<dbReference type="PANTHER" id="PTHR43697">
    <property type="entry name" value="SERYL-TRNA SYNTHETASE"/>
    <property type="match status" value="1"/>
</dbReference>
<dbReference type="Pfam" id="PF02403">
    <property type="entry name" value="Seryl_tRNA_N"/>
    <property type="match status" value="1"/>
</dbReference>
<dbReference type="Pfam" id="PF00587">
    <property type="entry name" value="tRNA-synt_2b"/>
    <property type="match status" value="1"/>
</dbReference>
<dbReference type="PIRSF" id="PIRSF001529">
    <property type="entry name" value="Ser-tRNA-synth_IIa"/>
    <property type="match status" value="1"/>
</dbReference>
<dbReference type="PRINTS" id="PR00981">
    <property type="entry name" value="TRNASYNTHSER"/>
</dbReference>
<dbReference type="SUPFAM" id="SSF55681">
    <property type="entry name" value="Class II aaRS and biotin synthetases"/>
    <property type="match status" value="1"/>
</dbReference>
<dbReference type="SUPFAM" id="SSF46589">
    <property type="entry name" value="tRNA-binding arm"/>
    <property type="match status" value="1"/>
</dbReference>
<dbReference type="PROSITE" id="PS50862">
    <property type="entry name" value="AA_TRNA_LIGASE_II"/>
    <property type="match status" value="1"/>
</dbReference>